<sequence>MNLKQIAKDTAKTLQSYLTYQALRTVLAQLGETNPPLALWLHNFSAGKVQDGEKYIEELFLEKPDLALRIMTVREHIAEEIAEFLPEMVVTGIQQANMEKRRQHLERMTQVSLSHPSPESEQQQFSDPDWDNLAS</sequence>
<reference key="1">
    <citation type="journal article" date="1994" name="J. Bacteriol.">
        <title>Transcription control of ribulose bisphosphate carboxylase/oxygenase activase and adjacent genes in Anabaena species.</title>
        <authorList>
            <person name="Li L.A."/>
            <person name="Tabita F.R."/>
        </authorList>
    </citation>
    <scope>NUCLEOTIDE SEQUENCE [GENOMIC DNA]</scope>
    <scope>INDUCTION BY LIGHT</scope>
    <scope>OPERON STRUCTURE</scope>
    <source>
        <strain>CA / ATCC 33047</strain>
    </source>
</reference>
<reference key="2">
    <citation type="journal article" date="1997" name="J. Bacteriol.">
        <title>Maximum activity of recombinant ribulose 1,5-bisphosphate carboxylase/oxygenase of Anabaena sp. strain CA requires the product of the rbcX gene.</title>
        <authorList>
            <person name="Li L.A."/>
            <person name="Tabita F.R."/>
        </authorList>
    </citation>
    <scope>FUNCTION UPON EXPRESSION IN E.COLI</scope>
    <source>
        <strain>CA / ATCC 33047</strain>
    </source>
</reference>
<reference evidence="11" key="3">
    <citation type="journal article" date="2007" name="Cell">
        <title>Structure and function of RbcX, an assembly chaperone for hexadecameric Rubisco.</title>
        <authorList>
            <person name="Saschenbrecker S."/>
            <person name="Bracher A."/>
            <person name="Rao K.V."/>
            <person name="Rao B.V."/>
            <person name="Hartl F.U."/>
            <person name="Hayer-Hartl M."/>
        </authorList>
    </citation>
    <scope>X-RAY CRYSTALLOGRAPHY (2.50 ANGSTROMS)</scope>
    <scope>FUNCTION</scope>
    <scope>SUBUNIT</scope>
    <scope>DOMAIN</scope>
    <source>
        <strain>CA / ATCC 33047</strain>
    </source>
</reference>
<reference evidence="12 13" key="4">
    <citation type="journal article" date="2010" name="Nature">
        <title>Coupled chaperone action in folding and assembly of hexadecameric Rubisco.</title>
        <authorList>
            <person name="Liu C."/>
            <person name="Young A.L."/>
            <person name="Starling-Windhof A."/>
            <person name="Bracher A."/>
            <person name="Saschenbrecker S."/>
            <person name="Rao B.V."/>
            <person name="Rao K.V."/>
            <person name="Berninghausen O."/>
            <person name="Mielke T."/>
            <person name="Hartl F.U."/>
            <person name="Beckmann R."/>
            <person name="Hayer-Hartl M."/>
        </authorList>
    </citation>
    <scope>X-RAY CRYSTALLOGRAPHY (2.30 ANGSTROMS)</scope>
    <scope>STRUCTURE BY ELECTRON MICROSCOPY (9.00 ANGSTROMS) IN COMPLEX WITH SYNECHOCOCCUS RBCL</scope>
    <scope>FUNCTION</scope>
    <scope>SUBUNIT</scope>
    <scope>DOMAIN</scope>
    <scope>MUTAGENESIS OF 17-TYR--TYR-20 AND GLN-29</scope>
    <source>
        <strain>CA / ATCC 33047</strain>
    </source>
</reference>
<reference evidence="14" key="5">
    <citation type="journal article" date="2011" name="Nat. Struct. Mol. Biol.">
        <title>Crystal structure of a chaperone-bound assembly intermediate of form I Rubisco.</title>
        <authorList>
            <person name="Bracher A."/>
            <person name="Starling-Windhof A."/>
            <person name="Hartl F.U."/>
            <person name="Hayer-Hartl M."/>
        </authorList>
    </citation>
    <scope>X-RAY CRYSTALLOGRAPHY (3.20 ANGSTROMS) IN COMPLEX WITH SYNECHOCOCCUS RBCL</scope>
    <scope>FUNCTION</scope>
    <scope>SUBUNIT</scope>
    <source>
        <strain>CA / ATCC 33047</strain>
    </source>
</reference>
<accession>Q44212</accession>
<proteinExistence type="evidence at protein level"/>
<evidence type="ECO:0000255" key="1">
    <source>
        <dbReference type="HAMAP-Rule" id="MF_00855"/>
    </source>
</evidence>
<evidence type="ECO:0000256" key="2">
    <source>
        <dbReference type="SAM" id="MobiDB-lite"/>
    </source>
</evidence>
<evidence type="ECO:0000269" key="3">
    <source>
    </source>
</evidence>
<evidence type="ECO:0000269" key="4">
    <source>
    </source>
</evidence>
<evidence type="ECO:0000269" key="5">
    <source>
    </source>
</evidence>
<evidence type="ECO:0000269" key="6">
    <source>
    </source>
</evidence>
<evidence type="ECO:0000269" key="7">
    <source>
    </source>
</evidence>
<evidence type="ECO:0000303" key="8">
    <source>
    </source>
</evidence>
<evidence type="ECO:0000303" key="9">
    <source>
    </source>
</evidence>
<evidence type="ECO:0000305" key="10">
    <source>
    </source>
</evidence>
<evidence type="ECO:0007744" key="11">
    <source>
        <dbReference type="PDB" id="2PEO"/>
    </source>
</evidence>
<evidence type="ECO:0007744" key="12">
    <source>
        <dbReference type="PDB" id="2WVW"/>
    </source>
</evidence>
<evidence type="ECO:0007744" key="13">
    <source>
        <dbReference type="PDB" id="3HYB"/>
    </source>
</evidence>
<evidence type="ECO:0007744" key="14">
    <source>
        <dbReference type="PDB" id="3RG6"/>
    </source>
</evidence>
<evidence type="ECO:0007829" key="15">
    <source>
        <dbReference type="PDB" id="3HYB"/>
    </source>
</evidence>
<keyword id="KW-0002">3D-structure</keyword>
<keyword id="KW-1283">Bacterial microcompartment</keyword>
<keyword id="KW-0120">Carbon dioxide fixation</keyword>
<keyword id="KW-1282">Carboxysome</keyword>
<keyword id="KW-0143">Chaperone</keyword>
<keyword id="KW-0963">Cytoplasm</keyword>
<keyword id="KW-0602">Photosynthesis</keyword>
<feature type="chain" id="PRO_0000451299" description="RuBisCO chaperone RbcX">
    <location>
        <begin position="1"/>
        <end position="135"/>
    </location>
</feature>
<feature type="region of interest" description="Disordered" evidence="2">
    <location>
        <begin position="103"/>
        <end position="135"/>
    </location>
</feature>
<feature type="compositionally biased region" description="Polar residues" evidence="2">
    <location>
        <begin position="109"/>
        <end position="126"/>
    </location>
</feature>
<feature type="mutagenesis site" description="No longer prevents RbcL-GroEL association." evidence="4">
    <original>YLTY</original>
    <variation>ALTA</variation>
    <location>
        <begin position="17"/>
        <end position="20"/>
    </location>
</feature>
<feature type="mutagenesis site" description="No longer prevents RbcL-GroEL association." evidence="4">
    <original>Q</original>
    <variation>A</variation>
    <location>
        <position position="29"/>
    </location>
</feature>
<feature type="helix" evidence="15">
    <location>
        <begin position="3"/>
        <end position="33"/>
    </location>
</feature>
<feature type="helix" evidence="15">
    <location>
        <begin position="35"/>
        <end position="45"/>
    </location>
</feature>
<feature type="helix" evidence="15">
    <location>
        <begin position="52"/>
        <end position="62"/>
    </location>
</feature>
<feature type="helix" evidence="15">
    <location>
        <begin position="64"/>
        <end position="81"/>
    </location>
</feature>
<feature type="helix" evidence="15">
    <location>
        <begin position="82"/>
        <end position="84"/>
    </location>
</feature>
<feature type="helix" evidence="15">
    <location>
        <begin position="85"/>
        <end position="103"/>
    </location>
</feature>
<dbReference type="EMBL" id="U05590">
    <property type="protein sequence ID" value="AAA63603.1"/>
    <property type="molecule type" value="Genomic_DNA"/>
</dbReference>
<dbReference type="RefSeq" id="WP_066380855.1">
    <property type="nucleotide sequence ID" value="NZ_CAWMSA010000044.1"/>
</dbReference>
<dbReference type="PDB" id="2PEO">
    <property type="method" value="X-ray"/>
    <property type="resolution" value="2.50 A"/>
    <property type="chains" value="A/B=1-135"/>
</dbReference>
<dbReference type="PDB" id="2WVW">
    <property type="method" value="EM"/>
    <property type="resolution" value="9.00 A"/>
    <property type="chains" value="I/J/K/L/M/N/O/P/Q/R/S/T/U/V/W/X=1-135"/>
</dbReference>
<dbReference type="PDB" id="3HYB">
    <property type="method" value="X-ray"/>
    <property type="resolution" value="2.30 A"/>
    <property type="chains" value="A/B=1-135"/>
</dbReference>
<dbReference type="PDB" id="3RG6">
    <property type="method" value="X-ray"/>
    <property type="resolution" value="3.20 A"/>
    <property type="chains" value="C/D/E/F=1-135"/>
</dbReference>
<dbReference type="PDBsum" id="2PEO"/>
<dbReference type="PDBsum" id="2WVW"/>
<dbReference type="PDBsum" id="3HYB"/>
<dbReference type="PDBsum" id="3RG6"/>
<dbReference type="EMDB" id="EMD-1654"/>
<dbReference type="SMR" id="Q44212"/>
<dbReference type="DIP" id="DIP-59100N"/>
<dbReference type="IntAct" id="Q44212">
    <property type="interactions" value="1"/>
</dbReference>
<dbReference type="EvolutionaryTrace" id="Q44212"/>
<dbReference type="GO" id="GO:0031470">
    <property type="term" value="C:carboxysome"/>
    <property type="evidence" value="ECO:0007669"/>
    <property type="project" value="UniProtKB-SubCell"/>
</dbReference>
<dbReference type="GO" id="GO:0005737">
    <property type="term" value="C:cytoplasm"/>
    <property type="evidence" value="ECO:0007669"/>
    <property type="project" value="UniProtKB-SubCell"/>
</dbReference>
<dbReference type="GO" id="GO:0044183">
    <property type="term" value="F:protein folding chaperone"/>
    <property type="evidence" value="ECO:0007669"/>
    <property type="project" value="InterPro"/>
</dbReference>
<dbReference type="GO" id="GO:0042803">
    <property type="term" value="F:protein homodimerization activity"/>
    <property type="evidence" value="ECO:0000314"/>
    <property type="project" value="UniProtKB"/>
</dbReference>
<dbReference type="GO" id="GO:0015977">
    <property type="term" value="P:carbon fixation"/>
    <property type="evidence" value="ECO:0007669"/>
    <property type="project" value="UniProtKB-UniRule"/>
</dbReference>
<dbReference type="GO" id="GO:0015979">
    <property type="term" value="P:photosynthesis"/>
    <property type="evidence" value="ECO:0007669"/>
    <property type="project" value="UniProtKB-KW"/>
</dbReference>
<dbReference type="GO" id="GO:0110102">
    <property type="term" value="P:ribulose bisphosphate carboxylase complex assembly"/>
    <property type="evidence" value="ECO:0000314"/>
    <property type="project" value="UniProtKB"/>
</dbReference>
<dbReference type="Gene3D" id="1.10.1200.210">
    <property type="entry name" value="Chaperonin-like RbcX"/>
    <property type="match status" value="1"/>
</dbReference>
<dbReference type="HAMAP" id="MF_00855">
    <property type="entry name" value="RbcX"/>
    <property type="match status" value="1"/>
</dbReference>
<dbReference type="InterPro" id="IPR038052">
    <property type="entry name" value="Chaperonin_RbcX_sf"/>
</dbReference>
<dbReference type="InterPro" id="IPR003435">
    <property type="entry name" value="Chaperonin_RcbX"/>
</dbReference>
<dbReference type="InterPro" id="IPR046381">
    <property type="entry name" value="RbcX"/>
</dbReference>
<dbReference type="NCBIfam" id="NF047598">
    <property type="entry name" value="ChaprRbcXCyano"/>
    <property type="match status" value="1"/>
</dbReference>
<dbReference type="PANTHER" id="PTHR33791">
    <property type="entry name" value="CHAPERONIN-LIKE RBCX PROTEIN 1, CHLOROPLASTIC"/>
    <property type="match status" value="1"/>
</dbReference>
<dbReference type="PANTHER" id="PTHR33791:SF1">
    <property type="entry name" value="RUBISCO CHAPERONE RBCX"/>
    <property type="match status" value="1"/>
</dbReference>
<dbReference type="Pfam" id="PF02341">
    <property type="entry name" value="RbcX"/>
    <property type="match status" value="1"/>
</dbReference>
<dbReference type="SUPFAM" id="SSF158615">
    <property type="entry name" value="RbcX-like"/>
    <property type="match status" value="1"/>
</dbReference>
<protein>
    <recommendedName>
        <fullName evidence="1 9">RuBisCO chaperone RbcX</fullName>
    </recommendedName>
</protein>
<gene>
    <name evidence="1 8" type="primary">rbcX</name>
</gene>
<name>RBCX_ANASC</name>
<organism>
    <name type="scientific">Anabaena sp. (strain CA / ATCC 33047)</name>
    <dbReference type="NCBI Taxonomy" id="52271"/>
    <lineage>
        <taxon>Bacteria</taxon>
        <taxon>Bacillati</taxon>
        <taxon>Cyanobacteriota</taxon>
        <taxon>Cyanophyceae</taxon>
        <taxon>Nostocales</taxon>
        <taxon>Nostocaceae</taxon>
        <taxon>Anabaena</taxon>
    </lineage>
</organism>
<comment type="function">
    <text evidence="1 4 5">An RbcL-specific chaperone. The central cleft of the RbcX homodimer (RbcX2) binds the C-terminus of an RbcL monomer, stabilizing the C-terminus and probably preventing its reassociation with chaperonin GroEL-ES. At the same time the peripheral region of RbcX2 binds a second RbcL monomer, bridging the RbcL homodimers in the correct orientation. The RbcX2(2)-bound RbcL dimers then assemble into the RbcL8 core (RbcL8-(RbcX2)8). RbcS binding triggers the release of RbcX2 (PubMed:20075914, PubMed:21765418).</text>
</comment>
<comment type="function">
    <text evidence="7">Required for optimal reconstitution of RuBisCO upon expression of rbcL-rbcS subunits in E.coli (PubMed:9171433).</text>
</comment>
<comment type="subunit">
    <text evidence="3 4 5">Homodimer. Interacts with the exposed C-terminal peptide of RbcL ('Glu-459-Asp-468'); binds 1 RbcL peptide per homodimer (PubMed:17574029, PubMed:20075914, PubMed:21765418). Contacts a second RbcL monomer via its peripheral polar surface (PubMed:21765418). A slightly longer RbcL peptide binds to RbcX2 with a higher affinity (PubMed:17574029).</text>
</comment>
<comment type="interaction">
    <interactant intactId="EBI-9023244">
        <id>Q44212</id>
    </interactant>
    <interactant intactId="EBI-9023246">
        <id>P00880</id>
        <label>cbbL</label>
    </interactant>
    <organismsDiffer>true</organismsDiffer>
    <experiments>3</experiments>
</comment>
<comment type="subcellular location">
    <subcellularLocation>
        <location evidence="1">Carboxysome</location>
    </subcellularLocation>
    <subcellularLocation>
        <location evidence="1">Cytoplasm</location>
    </subcellularLocation>
    <text evidence="1">Most protein is cytoplasmic, but some is in the carboxysome.</text>
</comment>
<comment type="induction">
    <text evidence="6">Transcribed in light but much less in the dark in both normal air and 1% CO(2); the nitrogen source has no effect on transcription. Constitutively expressed when grown on fructose. Part of the rbcL-rbcX-rbcS operon.</text>
</comment>
<comment type="domain">
    <text evidence="1 4 10">The homodimer has 2 functional domains, a central cleft essential for production of soluble RbcL in which the RbcL peptide binds, and a polar surface which plays a role in correct RbcL subunit arrangement.</text>
</comment>
<comment type="similarity">
    <text evidence="1">Belongs to the RbcX family.</text>
</comment>